<dbReference type="EMBL" id="AK125975">
    <property type="status" value="NOT_ANNOTATED_CDS"/>
    <property type="molecule type" value="mRNA"/>
</dbReference>
<dbReference type="EMBL" id="AC092653">
    <property type="status" value="NOT_ANNOTATED_CDS"/>
    <property type="molecule type" value="Genomic_DNA"/>
</dbReference>
<dbReference type="CCDS" id="CCDS46338.1"/>
<dbReference type="RefSeq" id="NP_001073943.1">
    <property type="nucleotide sequence ID" value="NM_001080474.3"/>
</dbReference>
<dbReference type="RefSeq" id="NP_001340273.1">
    <property type="nucleotide sequence ID" value="NM_001353344.3"/>
</dbReference>
<dbReference type="RefSeq" id="XP_005264359.1">
    <property type="nucleotide sequence ID" value="XM_005264302.3"/>
</dbReference>
<dbReference type="BioGRID" id="132921">
    <property type="interactions" value="7"/>
</dbReference>
<dbReference type="IntAct" id="A6NCI8">
    <property type="interactions" value="3"/>
</dbReference>
<dbReference type="STRING" id="9606.ENSP00000387124"/>
<dbReference type="GlyGen" id="A6NCI8">
    <property type="glycosylation" value="1 site"/>
</dbReference>
<dbReference type="iPTMnet" id="A6NCI8"/>
<dbReference type="PhosphoSitePlus" id="A6NCI8"/>
<dbReference type="BioMuta" id="C2orf78"/>
<dbReference type="jPOST" id="A6NCI8"/>
<dbReference type="MassIVE" id="A6NCI8"/>
<dbReference type="PaxDb" id="9606-ENSP00000387124"/>
<dbReference type="PeptideAtlas" id="A6NCI8"/>
<dbReference type="ProteomicsDB" id="838"/>
<dbReference type="Antibodypedia" id="81892">
    <property type="antibodies" value="2 antibodies from 2 providers"/>
</dbReference>
<dbReference type="DNASU" id="388960"/>
<dbReference type="Ensembl" id="ENST00000409561.2">
    <property type="protein sequence ID" value="ENSP00000387124.1"/>
    <property type="gene ID" value="ENSG00000187833.8"/>
</dbReference>
<dbReference type="Ensembl" id="ENST00000707660.1">
    <property type="protein sequence ID" value="ENSP00000516952.1"/>
    <property type="gene ID" value="ENSG00000291484.1"/>
</dbReference>
<dbReference type="GeneID" id="388960"/>
<dbReference type="KEGG" id="hsa:388960"/>
<dbReference type="MANE-Select" id="ENST00000409561.2">
    <property type="protein sequence ID" value="ENSP00000387124.1"/>
    <property type="RefSeq nucleotide sequence ID" value="NM_001080474.3"/>
    <property type="RefSeq protein sequence ID" value="NP_001073943.1"/>
</dbReference>
<dbReference type="UCSC" id="uc002sjr.1">
    <property type="organism name" value="human"/>
</dbReference>
<dbReference type="AGR" id="HGNC:34349"/>
<dbReference type="CTD" id="388960"/>
<dbReference type="GeneCards" id="C2orf78"/>
<dbReference type="HGNC" id="HGNC:34349">
    <property type="gene designation" value="C2orf78"/>
</dbReference>
<dbReference type="HPA" id="ENSG00000187833">
    <property type="expression patterns" value="Tissue enriched (testis)"/>
</dbReference>
<dbReference type="neXtProt" id="NX_A6NCI8"/>
<dbReference type="OpenTargets" id="ENSG00000187833"/>
<dbReference type="VEuPathDB" id="HostDB:ENSG00000187833"/>
<dbReference type="eggNOG" id="ENOG502SEP6">
    <property type="taxonomic scope" value="Eukaryota"/>
</dbReference>
<dbReference type="GeneTree" id="ENSGT00390000014208"/>
<dbReference type="HOGENOM" id="CLU_016596_0_0_1"/>
<dbReference type="InParanoid" id="A6NCI8"/>
<dbReference type="OMA" id="QDFCFQP"/>
<dbReference type="OrthoDB" id="9808992at2759"/>
<dbReference type="PAN-GO" id="A6NCI8">
    <property type="GO annotations" value="0 GO annotations based on evolutionary models"/>
</dbReference>
<dbReference type="PhylomeDB" id="A6NCI8"/>
<dbReference type="TreeFam" id="TF337929"/>
<dbReference type="PathwayCommons" id="A6NCI8"/>
<dbReference type="SignaLink" id="A6NCI8"/>
<dbReference type="BioGRID-ORCS" id="388960">
    <property type="hits" value="10 hits in 1133 CRISPR screens"/>
</dbReference>
<dbReference type="GenomeRNAi" id="388960"/>
<dbReference type="Pharos" id="A6NCI8">
    <property type="development level" value="Tdark"/>
</dbReference>
<dbReference type="PRO" id="PR:A6NCI8"/>
<dbReference type="Proteomes" id="UP000005640">
    <property type="component" value="Chromosome 2"/>
</dbReference>
<dbReference type="RNAct" id="A6NCI8">
    <property type="molecule type" value="protein"/>
</dbReference>
<dbReference type="Bgee" id="ENSG00000187833">
    <property type="expression patterns" value="Expressed in male germ line stem cell (sensu Vertebrata) in testis and 6 other cell types or tissues"/>
</dbReference>
<dbReference type="InterPro" id="IPR040292">
    <property type="entry name" value="C2orf78-like"/>
</dbReference>
<dbReference type="InterPro" id="IPR027898">
    <property type="entry name" value="DUF4629"/>
</dbReference>
<dbReference type="PANTHER" id="PTHR31466">
    <property type="entry name" value="GENE 5591-RELATED"/>
    <property type="match status" value="1"/>
</dbReference>
<dbReference type="PANTHER" id="PTHR31466:SF1">
    <property type="entry name" value="RIKEN CDNA 4930433I11 GENE"/>
    <property type="match status" value="1"/>
</dbReference>
<dbReference type="Pfam" id="PF15442">
    <property type="entry name" value="DUF4629"/>
    <property type="match status" value="1"/>
</dbReference>
<sequence length="922" mass="100170">MHWLASATQTSASIVSSSLLSAVDVSSSLTMSEYFQNTSLPGTANSRQFSLPVVSNAAFLTGSISNFSRASAPAISSAWLQPSASGTSFQPLMGSAYLYQHSSTTMLSGVTGQSHICTSAASYPGVFEWDSTASTVKKSSSLRDFTVTVIDQNTAVSSMSMTAQYYKTSDTNTMVPLYPSLSASLVQGTLTQIPNQQGHNLSLPCQIGSQVYYYNQGTLGPQLSCLQSYGSVSYTGYRASAHQPEMVMVLKEVQPTNVLPPVSTSGMYYSVSSQPITETSVQVMETSLGMDTSLGLQSPSQTFCLPQTPEFSKSFSSRNTQTLESNPSPELGDISITPVQSPTNLLTLSPAPSQEKNENENLDEIKTNLSKPLDVHQILIGNQDPPLLPVEIPDIHPLLACIDPLGQEEQPGSENANLRNKSLSLEDQGIFENGIESSSDLADITTWVEDTYLPPIFSSLQDLDQPESPSAKKAKDTSAIKVNQVQEKSCVIKGHSDQVRKNKHKASEPIQGAPKAKIQPKNPECLLEREVVVGSATVSNSASVNKAKHSSNKPHKAASSRISKTKSHGQEKTKGNRKNSSKKSEESKQSGKKVKVEEKQTIPNMKRKKNQPELSQKTLKKPRSSLGMHMLESVQVFHALGKKIDMKTGFSSSRTLGSSSNTQNRQPFPALKPWLDIQHEGKGPEKIQVKAQKLDGSAEKECTSPSHSELPPPGKVKLIPLPFLTLDQPQARHVSRRPNPLASRRPAVAYPARPDSTNSAQSNAVNPSRPAPTNTSLTGPATPAQPISAKATQPSSANPTQPTVPQSAASRPSAYKTSSCSSLQREPVSTAVTSLRSLPKPQNQFLIQDFSLQPRPWRKPTVPEPVMSTPITEEQRPEREAMKRKAQQERENAAKYTSLGKVQFFIERERDMEIAEYYGYTI</sequence>
<reference key="1">
    <citation type="journal article" date="2004" name="Nat. Genet.">
        <title>Complete sequencing and characterization of 21,243 full-length human cDNAs.</title>
        <authorList>
            <person name="Ota T."/>
            <person name="Suzuki Y."/>
            <person name="Nishikawa T."/>
            <person name="Otsuki T."/>
            <person name="Sugiyama T."/>
            <person name="Irie R."/>
            <person name="Wakamatsu A."/>
            <person name="Hayashi K."/>
            <person name="Sato H."/>
            <person name="Nagai K."/>
            <person name="Kimura K."/>
            <person name="Makita H."/>
            <person name="Sekine M."/>
            <person name="Obayashi M."/>
            <person name="Nishi T."/>
            <person name="Shibahara T."/>
            <person name="Tanaka T."/>
            <person name="Ishii S."/>
            <person name="Yamamoto J."/>
            <person name="Saito K."/>
            <person name="Kawai Y."/>
            <person name="Isono Y."/>
            <person name="Nakamura Y."/>
            <person name="Nagahari K."/>
            <person name="Murakami K."/>
            <person name="Yasuda T."/>
            <person name="Iwayanagi T."/>
            <person name="Wagatsuma M."/>
            <person name="Shiratori A."/>
            <person name="Sudo H."/>
            <person name="Hosoiri T."/>
            <person name="Kaku Y."/>
            <person name="Kodaira H."/>
            <person name="Kondo H."/>
            <person name="Sugawara M."/>
            <person name="Takahashi M."/>
            <person name="Kanda K."/>
            <person name="Yokoi T."/>
            <person name="Furuya T."/>
            <person name="Kikkawa E."/>
            <person name="Omura Y."/>
            <person name="Abe K."/>
            <person name="Kamihara K."/>
            <person name="Katsuta N."/>
            <person name="Sato K."/>
            <person name="Tanikawa M."/>
            <person name="Yamazaki M."/>
            <person name="Ninomiya K."/>
            <person name="Ishibashi T."/>
            <person name="Yamashita H."/>
            <person name="Murakawa K."/>
            <person name="Fujimori K."/>
            <person name="Tanai H."/>
            <person name="Kimata M."/>
            <person name="Watanabe M."/>
            <person name="Hiraoka S."/>
            <person name="Chiba Y."/>
            <person name="Ishida S."/>
            <person name="Ono Y."/>
            <person name="Takiguchi S."/>
            <person name="Watanabe S."/>
            <person name="Yosida M."/>
            <person name="Hotuta T."/>
            <person name="Kusano J."/>
            <person name="Kanehori K."/>
            <person name="Takahashi-Fujii A."/>
            <person name="Hara H."/>
            <person name="Tanase T.-O."/>
            <person name="Nomura Y."/>
            <person name="Togiya S."/>
            <person name="Komai F."/>
            <person name="Hara R."/>
            <person name="Takeuchi K."/>
            <person name="Arita M."/>
            <person name="Imose N."/>
            <person name="Musashino K."/>
            <person name="Yuuki H."/>
            <person name="Oshima A."/>
            <person name="Sasaki N."/>
            <person name="Aotsuka S."/>
            <person name="Yoshikawa Y."/>
            <person name="Matsunawa H."/>
            <person name="Ichihara T."/>
            <person name="Shiohata N."/>
            <person name="Sano S."/>
            <person name="Moriya S."/>
            <person name="Momiyama H."/>
            <person name="Satoh N."/>
            <person name="Takami S."/>
            <person name="Terashima Y."/>
            <person name="Suzuki O."/>
            <person name="Nakagawa S."/>
            <person name="Senoh A."/>
            <person name="Mizoguchi H."/>
            <person name="Goto Y."/>
            <person name="Shimizu F."/>
            <person name="Wakebe H."/>
            <person name="Hishigaki H."/>
            <person name="Watanabe T."/>
            <person name="Sugiyama A."/>
            <person name="Takemoto M."/>
            <person name="Kawakami B."/>
            <person name="Yamazaki M."/>
            <person name="Watanabe K."/>
            <person name="Kumagai A."/>
            <person name="Itakura S."/>
            <person name="Fukuzumi Y."/>
            <person name="Fujimori Y."/>
            <person name="Komiyama M."/>
            <person name="Tashiro H."/>
            <person name="Tanigami A."/>
            <person name="Fujiwara T."/>
            <person name="Ono T."/>
            <person name="Yamada K."/>
            <person name="Fujii Y."/>
            <person name="Ozaki K."/>
            <person name="Hirao M."/>
            <person name="Ohmori Y."/>
            <person name="Kawabata A."/>
            <person name="Hikiji T."/>
            <person name="Kobatake N."/>
            <person name="Inagaki H."/>
            <person name="Ikema Y."/>
            <person name="Okamoto S."/>
            <person name="Okitani R."/>
            <person name="Kawakami T."/>
            <person name="Noguchi S."/>
            <person name="Itoh T."/>
            <person name="Shigeta K."/>
            <person name="Senba T."/>
            <person name="Matsumura K."/>
            <person name="Nakajima Y."/>
            <person name="Mizuno T."/>
            <person name="Morinaga M."/>
            <person name="Sasaki M."/>
            <person name="Togashi T."/>
            <person name="Oyama M."/>
            <person name="Hata H."/>
            <person name="Watanabe M."/>
            <person name="Komatsu T."/>
            <person name="Mizushima-Sugano J."/>
            <person name="Satoh T."/>
            <person name="Shirai Y."/>
            <person name="Takahashi Y."/>
            <person name="Nakagawa K."/>
            <person name="Okumura K."/>
            <person name="Nagase T."/>
            <person name="Nomura N."/>
            <person name="Kikuchi H."/>
            <person name="Masuho Y."/>
            <person name="Yamashita R."/>
            <person name="Nakai K."/>
            <person name="Yada T."/>
            <person name="Nakamura Y."/>
            <person name="Ohara O."/>
            <person name="Isogai T."/>
            <person name="Sugano S."/>
        </authorList>
    </citation>
    <scope>NUCLEOTIDE SEQUENCE [LARGE SCALE MRNA]</scope>
</reference>
<reference key="2">
    <citation type="journal article" date="2005" name="Nature">
        <title>Generation and annotation of the DNA sequences of human chromosomes 2 and 4.</title>
        <authorList>
            <person name="Hillier L.W."/>
            <person name="Graves T.A."/>
            <person name="Fulton R.S."/>
            <person name="Fulton L.A."/>
            <person name="Pepin K.H."/>
            <person name="Minx P."/>
            <person name="Wagner-McPherson C."/>
            <person name="Layman D."/>
            <person name="Wylie K."/>
            <person name="Sekhon M."/>
            <person name="Becker M.C."/>
            <person name="Fewell G.A."/>
            <person name="Delehaunty K.D."/>
            <person name="Miner T.L."/>
            <person name="Nash W.E."/>
            <person name="Kremitzki C."/>
            <person name="Oddy L."/>
            <person name="Du H."/>
            <person name="Sun H."/>
            <person name="Bradshaw-Cordum H."/>
            <person name="Ali J."/>
            <person name="Carter J."/>
            <person name="Cordes M."/>
            <person name="Harris A."/>
            <person name="Isak A."/>
            <person name="van Brunt A."/>
            <person name="Nguyen C."/>
            <person name="Du F."/>
            <person name="Courtney L."/>
            <person name="Kalicki J."/>
            <person name="Ozersky P."/>
            <person name="Abbott S."/>
            <person name="Armstrong J."/>
            <person name="Belter E.A."/>
            <person name="Caruso L."/>
            <person name="Cedroni M."/>
            <person name="Cotton M."/>
            <person name="Davidson T."/>
            <person name="Desai A."/>
            <person name="Elliott G."/>
            <person name="Erb T."/>
            <person name="Fronick C."/>
            <person name="Gaige T."/>
            <person name="Haakenson W."/>
            <person name="Haglund K."/>
            <person name="Holmes A."/>
            <person name="Harkins R."/>
            <person name="Kim K."/>
            <person name="Kruchowski S.S."/>
            <person name="Strong C.M."/>
            <person name="Grewal N."/>
            <person name="Goyea E."/>
            <person name="Hou S."/>
            <person name="Levy A."/>
            <person name="Martinka S."/>
            <person name="Mead K."/>
            <person name="McLellan M.D."/>
            <person name="Meyer R."/>
            <person name="Randall-Maher J."/>
            <person name="Tomlinson C."/>
            <person name="Dauphin-Kohlberg S."/>
            <person name="Kozlowicz-Reilly A."/>
            <person name="Shah N."/>
            <person name="Swearengen-Shahid S."/>
            <person name="Snider J."/>
            <person name="Strong J.T."/>
            <person name="Thompson J."/>
            <person name="Yoakum M."/>
            <person name="Leonard S."/>
            <person name="Pearman C."/>
            <person name="Trani L."/>
            <person name="Radionenko M."/>
            <person name="Waligorski J.E."/>
            <person name="Wang C."/>
            <person name="Rock S.M."/>
            <person name="Tin-Wollam A.-M."/>
            <person name="Maupin R."/>
            <person name="Latreille P."/>
            <person name="Wendl M.C."/>
            <person name="Yang S.-P."/>
            <person name="Pohl C."/>
            <person name="Wallis J.W."/>
            <person name="Spieth J."/>
            <person name="Bieri T.A."/>
            <person name="Berkowicz N."/>
            <person name="Nelson J.O."/>
            <person name="Osborne J."/>
            <person name="Ding L."/>
            <person name="Meyer R."/>
            <person name="Sabo A."/>
            <person name="Shotland Y."/>
            <person name="Sinha P."/>
            <person name="Wohldmann P.E."/>
            <person name="Cook L.L."/>
            <person name="Hickenbotham M.T."/>
            <person name="Eldred J."/>
            <person name="Williams D."/>
            <person name="Jones T.A."/>
            <person name="She X."/>
            <person name="Ciccarelli F.D."/>
            <person name="Izaurralde E."/>
            <person name="Taylor J."/>
            <person name="Schmutz J."/>
            <person name="Myers R.M."/>
            <person name="Cox D.R."/>
            <person name="Huang X."/>
            <person name="McPherson J.D."/>
            <person name="Mardis E.R."/>
            <person name="Clifton S.W."/>
            <person name="Warren W.C."/>
            <person name="Chinwalla A.T."/>
            <person name="Eddy S.R."/>
            <person name="Marra M.A."/>
            <person name="Ovcharenko I."/>
            <person name="Furey T.S."/>
            <person name="Miller W."/>
            <person name="Eichler E.E."/>
            <person name="Bork P."/>
            <person name="Suyama M."/>
            <person name="Torrents D."/>
            <person name="Waterston R.H."/>
            <person name="Wilson R.K."/>
        </authorList>
    </citation>
    <scope>NUCLEOTIDE SEQUENCE [LARGE SCALE GENOMIC DNA]</scope>
</reference>
<proteinExistence type="evidence at transcript level"/>
<feature type="chain" id="PRO_0000319422" description="Uncharacterized protein C2orf78">
    <location>
        <begin position="1"/>
        <end position="922"/>
    </location>
</feature>
<feature type="region of interest" description="Disordered" evidence="2">
    <location>
        <begin position="459"/>
        <end position="522"/>
    </location>
</feature>
<feature type="region of interest" description="Disordered" evidence="2">
    <location>
        <begin position="539"/>
        <end position="627"/>
    </location>
</feature>
<feature type="region of interest" description="Disordered" evidence="2">
    <location>
        <begin position="649"/>
        <end position="668"/>
    </location>
</feature>
<feature type="region of interest" description="Disordered" evidence="2">
    <location>
        <begin position="692"/>
        <end position="835"/>
    </location>
</feature>
<feature type="region of interest" description="Disordered" evidence="2">
    <location>
        <begin position="856"/>
        <end position="879"/>
    </location>
</feature>
<feature type="coiled-coil region" evidence="1">
    <location>
        <begin position="872"/>
        <end position="899"/>
    </location>
</feature>
<feature type="compositionally biased region" description="Basic residues" evidence="2">
    <location>
        <begin position="546"/>
        <end position="567"/>
    </location>
</feature>
<feature type="compositionally biased region" description="Basic and acidic residues" evidence="2">
    <location>
        <begin position="582"/>
        <end position="600"/>
    </location>
</feature>
<feature type="compositionally biased region" description="Low complexity" evidence="2">
    <location>
        <begin position="651"/>
        <end position="660"/>
    </location>
</feature>
<feature type="compositionally biased region" description="Basic and acidic residues" evidence="2">
    <location>
        <begin position="692"/>
        <end position="702"/>
    </location>
</feature>
<feature type="compositionally biased region" description="Polar residues" evidence="2">
    <location>
        <begin position="755"/>
        <end position="779"/>
    </location>
</feature>
<feature type="compositionally biased region" description="Polar residues" evidence="2">
    <location>
        <begin position="790"/>
        <end position="824"/>
    </location>
</feature>
<name>CB078_HUMAN</name>
<evidence type="ECO:0000255" key="1"/>
<evidence type="ECO:0000256" key="2">
    <source>
        <dbReference type="SAM" id="MobiDB-lite"/>
    </source>
</evidence>
<keyword id="KW-0175">Coiled coil</keyword>
<keyword id="KW-1185">Reference proteome</keyword>
<accession>A6NCI8</accession>
<organism>
    <name type="scientific">Homo sapiens</name>
    <name type="common">Human</name>
    <dbReference type="NCBI Taxonomy" id="9606"/>
    <lineage>
        <taxon>Eukaryota</taxon>
        <taxon>Metazoa</taxon>
        <taxon>Chordata</taxon>
        <taxon>Craniata</taxon>
        <taxon>Vertebrata</taxon>
        <taxon>Euteleostomi</taxon>
        <taxon>Mammalia</taxon>
        <taxon>Eutheria</taxon>
        <taxon>Euarchontoglires</taxon>
        <taxon>Primates</taxon>
        <taxon>Haplorrhini</taxon>
        <taxon>Catarrhini</taxon>
        <taxon>Hominidae</taxon>
        <taxon>Homo</taxon>
    </lineage>
</organism>
<gene>
    <name type="primary">C2orf78</name>
</gene>
<protein>
    <recommendedName>
        <fullName>Uncharacterized protein C2orf78</fullName>
    </recommendedName>
</protein>